<accession>F5HC14</accession>
<evidence type="ECO:0000250" key="1"/>
<evidence type="ECO:0000255" key="2"/>
<evidence type="ECO:0000256" key="3">
    <source>
        <dbReference type="SAM" id="MobiDB-lite"/>
    </source>
</evidence>
<evidence type="ECO:0000305" key="4"/>
<organismHost>
    <name type="scientific">Homo sapiens</name>
    <name type="common">Human</name>
    <dbReference type="NCBI Taxonomy" id="9606"/>
</organismHost>
<name>UL119_HCMVM</name>
<dbReference type="EMBL" id="AY446894">
    <property type="protein sequence ID" value="AAR31662.1"/>
    <property type="molecule type" value="Genomic_DNA"/>
</dbReference>
<dbReference type="GlyCosmos" id="F5HC14">
    <property type="glycosylation" value="12 sites, No reported glycans"/>
</dbReference>
<dbReference type="KEGG" id="vg:3077514"/>
<dbReference type="Reactome" id="R-HSA-9609690">
    <property type="pathway name" value="HCMV Early Events"/>
</dbReference>
<dbReference type="Proteomes" id="UP000000938">
    <property type="component" value="Segment"/>
</dbReference>
<dbReference type="GO" id="GO:0016020">
    <property type="term" value="C:membrane"/>
    <property type="evidence" value="ECO:0007669"/>
    <property type="project" value="UniProtKB-KW"/>
</dbReference>
<dbReference type="GO" id="GO:0055036">
    <property type="term" value="C:virion membrane"/>
    <property type="evidence" value="ECO:0007669"/>
    <property type="project" value="UniProtKB-SubCell"/>
</dbReference>
<protein>
    <recommendedName>
        <fullName>Viral Fc-gamma receptor-like protein UL119</fullName>
    </recommendedName>
    <alternativeName>
        <fullName>gp68</fullName>
    </alternativeName>
</protein>
<comment type="function">
    <text evidence="1">Serves as a receptor for the Fc part of human IgG. May thus be involved in interfering with host Ig-mediated immune responses (By similarity).</text>
</comment>
<comment type="subcellular location">
    <subcellularLocation>
        <location evidence="4">Virion membrane</location>
        <topology evidence="4">Single-pass type I membrane protein</topology>
    </subcellularLocation>
</comment>
<proteinExistence type="inferred from homology"/>
<reference key="1">
    <citation type="journal article" date="2004" name="J. Gen. Virol.">
        <title>Genetic content of wild-type human cytomegalovirus.</title>
        <authorList>
            <person name="Dolan A."/>
            <person name="Cunningham C."/>
            <person name="Hector R.D."/>
            <person name="Hassan-Walker A.F."/>
            <person name="Lee L."/>
            <person name="Addison C."/>
            <person name="Dargan D.J."/>
            <person name="McGeoch D.J."/>
            <person name="Gatherer D."/>
            <person name="Emery V.C."/>
            <person name="Griffiths P.D."/>
            <person name="Sinzger C."/>
            <person name="McSharry B.P."/>
            <person name="Wilkinson G.W.G."/>
            <person name="Davison A.J."/>
        </authorList>
    </citation>
    <scope>NUCLEOTIDE SEQUENCE [LARGE SCALE GENOMIC DNA]</scope>
</reference>
<organism>
    <name type="scientific">Human cytomegalovirus (strain Merlin)</name>
    <name type="common">HHV-5</name>
    <name type="synonym">Human herpesvirus 5</name>
    <dbReference type="NCBI Taxonomy" id="295027"/>
    <lineage>
        <taxon>Viruses</taxon>
        <taxon>Duplodnaviria</taxon>
        <taxon>Heunggongvirae</taxon>
        <taxon>Peploviricota</taxon>
        <taxon>Herviviricetes</taxon>
        <taxon>Herpesvirales</taxon>
        <taxon>Orthoherpesviridae</taxon>
        <taxon>Betaherpesvirinae</taxon>
        <taxon>Cytomegalovirus</taxon>
        <taxon>Cytomegalovirus humanbeta5</taxon>
        <taxon>Human cytomegalovirus</taxon>
    </lineage>
</organism>
<sequence length="345" mass="38711">MCSVLAIALVVALLGDMHPGVKSSTTSAVTSPSNTTVTSTTSISTSNNVSSAVTTTVQTSTSSASTSVIATTQKEGHLYTVNCEASYSYDQVSLNATCKVILLNNTKNPDILSVTCYARTDCKGPFTQVGYLSAFPSNDKGKLHLSYNATAQELLISGLRPQETTEYTCSFFSWGRHHNATWDLFTYPIYAVYGTRLNATTMRVRVLLQEHEHCLLNGSSLYHPNSTVHLHQGDQLIPPWNISNVTYNGQRLREFVFYLNGTYTVVRLHVQIAGRSFTTTYVFIKSDPLFEDRLLAYGVLAFLVFMVIILLYVTYMLARRRDWSYKRLEEPVEEKKHPVPYFKQW</sequence>
<feature type="signal peptide" evidence="2">
    <location>
        <begin position="1"/>
        <end position="23"/>
    </location>
</feature>
<feature type="chain" id="PRO_0000417836" description="Viral Fc-gamma receptor-like protein UL119">
    <location>
        <begin position="24"/>
        <end position="345"/>
    </location>
</feature>
<feature type="topological domain" description="Virion surface" evidence="2">
    <location>
        <begin position="24"/>
        <end position="293"/>
    </location>
</feature>
<feature type="transmembrane region" description="Helical" evidence="2">
    <location>
        <begin position="294"/>
        <end position="314"/>
    </location>
</feature>
<feature type="topological domain" description="Intravirion" evidence="2">
    <location>
        <begin position="315"/>
        <end position="345"/>
    </location>
</feature>
<feature type="domain" description="Ig-like V-type">
    <location>
        <begin position="91"/>
        <end position="190"/>
    </location>
</feature>
<feature type="region of interest" description="Disordered" evidence="3">
    <location>
        <begin position="23"/>
        <end position="43"/>
    </location>
</feature>
<feature type="glycosylation site" description="N-linked (GlcNAc...) asparagine; by host" evidence="2">
    <location>
        <position position="34"/>
    </location>
</feature>
<feature type="glycosylation site" description="N-linked (GlcNAc...) asparagine; by host" evidence="2">
    <location>
        <position position="48"/>
    </location>
</feature>
<feature type="glycosylation site" description="N-linked (GlcNAc...) asparagine; by host" evidence="2">
    <location>
        <position position="95"/>
    </location>
</feature>
<feature type="glycosylation site" description="N-linked (GlcNAc...) asparagine; by host" evidence="2">
    <location>
        <position position="104"/>
    </location>
</feature>
<feature type="glycosylation site" description="N-linked (GlcNAc...) asparagine; by host" evidence="2">
    <location>
        <position position="148"/>
    </location>
</feature>
<feature type="glycosylation site" description="N-linked (GlcNAc...) asparagine; by host" evidence="2">
    <location>
        <position position="179"/>
    </location>
</feature>
<feature type="glycosylation site" description="N-linked (GlcNAc...) asparagine; by host" evidence="2">
    <location>
        <position position="198"/>
    </location>
</feature>
<feature type="glycosylation site" description="N-linked (GlcNAc...) asparagine; by host" evidence="2">
    <location>
        <position position="217"/>
    </location>
</feature>
<feature type="glycosylation site" description="N-linked (GlcNAc...) asparagine; by host" evidence="2">
    <location>
        <position position="225"/>
    </location>
</feature>
<feature type="glycosylation site" description="N-linked (GlcNAc...) asparagine; by host" evidence="2">
    <location>
        <position position="241"/>
    </location>
</feature>
<feature type="glycosylation site" description="N-linked (GlcNAc...) asparagine; by host" evidence="2">
    <location>
        <position position="244"/>
    </location>
</feature>
<feature type="glycosylation site" description="N-linked (GlcNAc...) asparagine; by host" evidence="2">
    <location>
        <position position="260"/>
    </location>
</feature>
<keyword id="KW-0325">Glycoprotein</keyword>
<keyword id="KW-0945">Host-virus interaction</keyword>
<keyword id="KW-0393">Immunoglobulin domain</keyword>
<keyword id="KW-0472">Membrane</keyword>
<keyword id="KW-1124">Modulation of host immunity by viral IgG Fc receptor-like protein</keyword>
<keyword id="KW-1185">Reference proteome</keyword>
<keyword id="KW-0732">Signal</keyword>
<keyword id="KW-0812">Transmembrane</keyword>
<keyword id="KW-1133">Transmembrane helix</keyword>
<keyword id="KW-0899">Viral immunoevasion</keyword>
<keyword id="KW-0946">Virion</keyword>
<gene>
    <name type="primary">UL119/UL118</name>
</gene>